<feature type="chain" id="PRO_0000296613" description="Large ribosomal subunit protein bL32c">
    <location>
        <begin position="1"/>
        <end position="41"/>
    </location>
</feature>
<comment type="subcellular location">
    <subcellularLocation>
        <location>Plastid</location>
    </subcellularLocation>
</comment>
<comment type="similarity">
    <text evidence="1">Belongs to the bacterial ribosomal protein bL32 family.</text>
</comment>
<accession>Q2EEX8</accession>
<name>RK32_HELSJ</name>
<reference key="1">
    <citation type="journal article" date="2006" name="BMC Biol.">
        <title>The complete plastid genome sequence of the parasitic green alga, Helicosporidium sp. is highly reduced and structured.</title>
        <authorList>
            <person name="de Koning A.P."/>
            <person name="Keeling P.J."/>
        </authorList>
    </citation>
    <scope>NUCLEOTIDE SEQUENCE [LARGE SCALE GENOMIC DNA]</scope>
</reference>
<dbReference type="EMBL" id="DQ398104">
    <property type="protein sequence ID" value="ABD33965.1"/>
    <property type="molecule type" value="Genomic_DNA"/>
</dbReference>
<dbReference type="RefSeq" id="YP_635916.1">
    <property type="nucleotide sequence ID" value="NC_008100.1"/>
</dbReference>
<dbReference type="SMR" id="Q2EEX8"/>
<dbReference type="GeneID" id="4100433"/>
<dbReference type="GO" id="GO:0009536">
    <property type="term" value="C:plastid"/>
    <property type="evidence" value="ECO:0007669"/>
    <property type="project" value="UniProtKB-SubCell"/>
</dbReference>
<dbReference type="GO" id="GO:1990904">
    <property type="term" value="C:ribonucleoprotein complex"/>
    <property type="evidence" value="ECO:0007669"/>
    <property type="project" value="UniProtKB-KW"/>
</dbReference>
<dbReference type="GO" id="GO:0005840">
    <property type="term" value="C:ribosome"/>
    <property type="evidence" value="ECO:0007669"/>
    <property type="project" value="UniProtKB-KW"/>
</dbReference>
<gene>
    <name type="primary">rpl32</name>
</gene>
<proteinExistence type="inferred from homology"/>
<organism>
    <name type="scientific">Helicosporidium sp. subsp. Simulium jonesii</name>
    <name type="common">Green alga</name>
    <dbReference type="NCBI Taxonomy" id="145475"/>
    <lineage>
        <taxon>Eukaryota</taxon>
        <taxon>Viridiplantae</taxon>
        <taxon>Chlorophyta</taxon>
        <taxon>core chlorophytes</taxon>
        <taxon>Trebouxiophyceae</taxon>
        <taxon>Chlorellales</taxon>
        <taxon>Chlorellaceae</taxon>
        <taxon>Helicosporidium</taxon>
    </lineage>
</organism>
<evidence type="ECO:0000305" key="1"/>
<protein>
    <recommendedName>
        <fullName evidence="1">Large ribosomal subunit protein bL32c</fullName>
    </recommendedName>
    <alternativeName>
        <fullName>50S ribosomal protein L32, plastid</fullName>
    </alternativeName>
</protein>
<geneLocation type="non-photosynthetic plastid"/>
<sequence length="41" mass="5022">MAVPKKRHSKRICKIKFYSWKSKFLKKVQFIINQKSIIKNK</sequence>
<keyword id="KW-0934">Plastid</keyword>
<keyword id="KW-0687">Ribonucleoprotein</keyword>
<keyword id="KW-0689">Ribosomal protein</keyword>